<proteinExistence type="inferred from homology"/>
<sequence length="410" mass="44689">MKKWKDIHPISWTIIIGTIFGRMATSMSIPFLAIYLTAVQGASASYAGLVIAASSSVGILASFYGGYISDKFGRKNMMLVSIFGWMLVFAGFAAASNLWVFFVVNALNGLCKSLFEPASKALLSDMTEEKTRLLVFNLRYAAINIGVVFGPVLGLYFGSSQSTTPFLVPAVIYGLYGIVLALQFKKHPSLSAPAQSRNMSVREAFMVTQKDYLFTIALVGITLCTFGYSQFSSTFPQYMAQNPLIGNGTKLYGLMLTLNAIVVLATQFPIVHFAKRFSPLCSLMLGNVMVSISMAIFTVSHGVPSIVMIVITFTIGEVLLFSMMDLYVDQIAKPGLKGTYFGAIGFSQLGNVIGPWVGGICIDLFGAGRPIYIFSVLSGITLLGLPFLAFAYRQMKMETTKHRSRLEKPL</sequence>
<reference key="1">
    <citation type="journal article" date="1996" name="Microbiology">
        <title>Systematic sequencing of the 283 kb 210 degrees-232 degrees region of the Bacillus subtilis genome containing the skin element and many sporulation genes.</title>
        <authorList>
            <person name="Mizuno M."/>
            <person name="Masuda S."/>
            <person name="Takemaru K."/>
            <person name="Hosono S."/>
            <person name="Sato T."/>
            <person name="Takeuchi M."/>
            <person name="Kobayashi Y."/>
        </authorList>
    </citation>
    <scope>NUCLEOTIDE SEQUENCE [GENOMIC DNA]</scope>
    <source>
        <strain>168 / JH642</strain>
    </source>
</reference>
<reference key="2">
    <citation type="journal article" date="1997" name="Nature">
        <title>The complete genome sequence of the Gram-positive bacterium Bacillus subtilis.</title>
        <authorList>
            <person name="Kunst F."/>
            <person name="Ogasawara N."/>
            <person name="Moszer I."/>
            <person name="Albertini A.M."/>
            <person name="Alloni G."/>
            <person name="Azevedo V."/>
            <person name="Bertero M.G."/>
            <person name="Bessieres P."/>
            <person name="Bolotin A."/>
            <person name="Borchert S."/>
            <person name="Borriss R."/>
            <person name="Boursier L."/>
            <person name="Brans A."/>
            <person name="Braun M."/>
            <person name="Brignell S.C."/>
            <person name="Bron S."/>
            <person name="Brouillet S."/>
            <person name="Bruschi C.V."/>
            <person name="Caldwell B."/>
            <person name="Capuano V."/>
            <person name="Carter N.M."/>
            <person name="Choi S.-K."/>
            <person name="Codani J.-J."/>
            <person name="Connerton I.F."/>
            <person name="Cummings N.J."/>
            <person name="Daniel R.A."/>
            <person name="Denizot F."/>
            <person name="Devine K.M."/>
            <person name="Duesterhoeft A."/>
            <person name="Ehrlich S.D."/>
            <person name="Emmerson P.T."/>
            <person name="Entian K.-D."/>
            <person name="Errington J."/>
            <person name="Fabret C."/>
            <person name="Ferrari E."/>
            <person name="Foulger D."/>
            <person name="Fritz C."/>
            <person name="Fujita M."/>
            <person name="Fujita Y."/>
            <person name="Fuma S."/>
            <person name="Galizzi A."/>
            <person name="Galleron N."/>
            <person name="Ghim S.-Y."/>
            <person name="Glaser P."/>
            <person name="Goffeau A."/>
            <person name="Golightly E.J."/>
            <person name="Grandi G."/>
            <person name="Guiseppi G."/>
            <person name="Guy B.J."/>
            <person name="Haga K."/>
            <person name="Haiech J."/>
            <person name="Harwood C.R."/>
            <person name="Henaut A."/>
            <person name="Hilbert H."/>
            <person name="Holsappel S."/>
            <person name="Hosono S."/>
            <person name="Hullo M.-F."/>
            <person name="Itaya M."/>
            <person name="Jones L.-M."/>
            <person name="Joris B."/>
            <person name="Karamata D."/>
            <person name="Kasahara Y."/>
            <person name="Klaerr-Blanchard M."/>
            <person name="Klein C."/>
            <person name="Kobayashi Y."/>
            <person name="Koetter P."/>
            <person name="Koningstein G."/>
            <person name="Krogh S."/>
            <person name="Kumano M."/>
            <person name="Kurita K."/>
            <person name="Lapidus A."/>
            <person name="Lardinois S."/>
            <person name="Lauber J."/>
            <person name="Lazarevic V."/>
            <person name="Lee S.-M."/>
            <person name="Levine A."/>
            <person name="Liu H."/>
            <person name="Masuda S."/>
            <person name="Mauel C."/>
            <person name="Medigue C."/>
            <person name="Medina N."/>
            <person name="Mellado R.P."/>
            <person name="Mizuno M."/>
            <person name="Moestl D."/>
            <person name="Nakai S."/>
            <person name="Noback M."/>
            <person name="Noone D."/>
            <person name="O'Reilly M."/>
            <person name="Ogawa K."/>
            <person name="Ogiwara A."/>
            <person name="Oudega B."/>
            <person name="Park S.-H."/>
            <person name="Parro V."/>
            <person name="Pohl T.M."/>
            <person name="Portetelle D."/>
            <person name="Porwollik S."/>
            <person name="Prescott A.M."/>
            <person name="Presecan E."/>
            <person name="Pujic P."/>
            <person name="Purnelle B."/>
            <person name="Rapoport G."/>
            <person name="Rey M."/>
            <person name="Reynolds S."/>
            <person name="Rieger M."/>
            <person name="Rivolta C."/>
            <person name="Rocha E."/>
            <person name="Roche B."/>
            <person name="Rose M."/>
            <person name="Sadaie Y."/>
            <person name="Sato T."/>
            <person name="Scanlan E."/>
            <person name="Schleich S."/>
            <person name="Schroeter R."/>
            <person name="Scoffone F."/>
            <person name="Sekiguchi J."/>
            <person name="Sekowska A."/>
            <person name="Seror S.J."/>
            <person name="Serror P."/>
            <person name="Shin B.-S."/>
            <person name="Soldo B."/>
            <person name="Sorokin A."/>
            <person name="Tacconi E."/>
            <person name="Takagi T."/>
            <person name="Takahashi H."/>
            <person name="Takemaru K."/>
            <person name="Takeuchi M."/>
            <person name="Tamakoshi A."/>
            <person name="Tanaka T."/>
            <person name="Terpstra P."/>
            <person name="Tognoni A."/>
            <person name="Tosato V."/>
            <person name="Uchiyama S."/>
            <person name="Vandenbol M."/>
            <person name="Vannier F."/>
            <person name="Vassarotti A."/>
            <person name="Viari A."/>
            <person name="Wambutt R."/>
            <person name="Wedler E."/>
            <person name="Wedler H."/>
            <person name="Weitzenegger T."/>
            <person name="Winters P."/>
            <person name="Wipat A."/>
            <person name="Yamamoto H."/>
            <person name="Yamane K."/>
            <person name="Yasumoto K."/>
            <person name="Yata K."/>
            <person name="Yoshida K."/>
            <person name="Yoshikawa H.-F."/>
            <person name="Zumstein E."/>
            <person name="Yoshikawa H."/>
            <person name="Danchin A."/>
        </authorList>
    </citation>
    <scope>NUCLEOTIDE SEQUENCE [LARGE SCALE GENOMIC DNA]</scope>
    <source>
        <strain>168</strain>
    </source>
</reference>
<reference key="3">
    <citation type="journal article" date="2009" name="Microbiology">
        <title>From a consortium sequence to a unified sequence: the Bacillus subtilis 168 reference genome a decade later.</title>
        <authorList>
            <person name="Barbe V."/>
            <person name="Cruveiller S."/>
            <person name="Kunst F."/>
            <person name="Lenoble P."/>
            <person name="Meurice G."/>
            <person name="Sekowska A."/>
            <person name="Vallenet D."/>
            <person name="Wang T."/>
            <person name="Moszer I."/>
            <person name="Medigue C."/>
            <person name="Danchin A."/>
        </authorList>
    </citation>
    <scope>SEQUENCE REVISION TO 347</scope>
</reference>
<evidence type="ECO:0000255" key="1"/>
<evidence type="ECO:0000305" key="2"/>
<gene>
    <name type="primary">yqjV</name>
    <name type="ordered locus">BSU23730</name>
</gene>
<dbReference type="EMBL" id="D84432">
    <property type="protein sequence ID" value="BAA12628.1"/>
    <property type="molecule type" value="Genomic_DNA"/>
</dbReference>
<dbReference type="EMBL" id="AL009126">
    <property type="protein sequence ID" value="CAB14305.2"/>
    <property type="molecule type" value="Genomic_DNA"/>
</dbReference>
<dbReference type="PIR" id="F69965">
    <property type="entry name" value="F69965"/>
</dbReference>
<dbReference type="RefSeq" id="NP_390254.2">
    <property type="nucleotide sequence ID" value="NC_000964.3"/>
</dbReference>
<dbReference type="RefSeq" id="WP_004398495.1">
    <property type="nucleotide sequence ID" value="NZ_OZ025638.1"/>
</dbReference>
<dbReference type="SMR" id="P54559"/>
<dbReference type="FunCoup" id="P54559">
    <property type="interactions" value="78"/>
</dbReference>
<dbReference type="PaxDb" id="224308-BSU23730"/>
<dbReference type="EnsemblBacteria" id="CAB14305">
    <property type="protein sequence ID" value="CAB14305"/>
    <property type="gene ID" value="BSU_23730"/>
</dbReference>
<dbReference type="GeneID" id="938706"/>
<dbReference type="KEGG" id="bsu:BSU23730"/>
<dbReference type="PATRIC" id="fig|224308.179.peg.2586"/>
<dbReference type="eggNOG" id="COG2211">
    <property type="taxonomic scope" value="Bacteria"/>
</dbReference>
<dbReference type="InParanoid" id="P54559"/>
<dbReference type="OrthoDB" id="8952229at2"/>
<dbReference type="PhylomeDB" id="P54559"/>
<dbReference type="BioCyc" id="BSUB:BSU23730-MONOMER"/>
<dbReference type="Proteomes" id="UP000001570">
    <property type="component" value="Chromosome"/>
</dbReference>
<dbReference type="GO" id="GO:0005886">
    <property type="term" value="C:plasma membrane"/>
    <property type="evidence" value="ECO:0000318"/>
    <property type="project" value="GO_Central"/>
</dbReference>
<dbReference type="GO" id="GO:0022857">
    <property type="term" value="F:transmembrane transporter activity"/>
    <property type="evidence" value="ECO:0007669"/>
    <property type="project" value="InterPro"/>
</dbReference>
<dbReference type="CDD" id="cd17329">
    <property type="entry name" value="MFS_MdtH_MDR_like"/>
    <property type="match status" value="1"/>
</dbReference>
<dbReference type="Gene3D" id="1.20.1250.20">
    <property type="entry name" value="MFS general substrate transporter like domains"/>
    <property type="match status" value="1"/>
</dbReference>
<dbReference type="InterPro" id="IPR011701">
    <property type="entry name" value="MFS"/>
</dbReference>
<dbReference type="InterPro" id="IPR020846">
    <property type="entry name" value="MFS_dom"/>
</dbReference>
<dbReference type="InterPro" id="IPR036259">
    <property type="entry name" value="MFS_trans_sf"/>
</dbReference>
<dbReference type="InterPro" id="IPR050171">
    <property type="entry name" value="MFS_Transporters"/>
</dbReference>
<dbReference type="InterPro" id="IPR005829">
    <property type="entry name" value="Sugar_transporter_CS"/>
</dbReference>
<dbReference type="InterPro" id="IPR001958">
    <property type="entry name" value="Tet-R_TetA/multi-R_MdtG-like"/>
</dbReference>
<dbReference type="PANTHER" id="PTHR23517:SF10">
    <property type="entry name" value="MAJOR FACILITATOR SUPERFAMILY (MFS) PROFILE DOMAIN-CONTAINING PROTEIN"/>
    <property type="match status" value="1"/>
</dbReference>
<dbReference type="PANTHER" id="PTHR23517">
    <property type="entry name" value="RESISTANCE PROTEIN MDTM, PUTATIVE-RELATED-RELATED"/>
    <property type="match status" value="1"/>
</dbReference>
<dbReference type="Pfam" id="PF07690">
    <property type="entry name" value="MFS_1"/>
    <property type="match status" value="1"/>
</dbReference>
<dbReference type="PRINTS" id="PR01035">
    <property type="entry name" value="TCRTETA"/>
</dbReference>
<dbReference type="SUPFAM" id="SSF103473">
    <property type="entry name" value="MFS general substrate transporter"/>
    <property type="match status" value="1"/>
</dbReference>
<dbReference type="PROSITE" id="PS50850">
    <property type="entry name" value="MFS"/>
    <property type="match status" value="1"/>
</dbReference>
<feature type="chain" id="PRO_0000173420" description="Uncharacterized MFS-type transporter YqjV">
    <location>
        <begin position="1"/>
        <end position="410"/>
    </location>
</feature>
<feature type="transmembrane region" description="Helical" evidence="1">
    <location>
        <begin position="14"/>
        <end position="34"/>
    </location>
</feature>
<feature type="transmembrane region" description="Helical" evidence="1">
    <location>
        <begin position="48"/>
        <end position="68"/>
    </location>
</feature>
<feature type="transmembrane region" description="Helical" evidence="1">
    <location>
        <begin position="82"/>
        <end position="102"/>
    </location>
</feature>
<feature type="transmembrane region" description="Helical" evidence="1">
    <location>
        <begin position="140"/>
        <end position="160"/>
    </location>
</feature>
<feature type="transmembrane region" description="Helical" evidence="1">
    <location>
        <begin position="164"/>
        <end position="184"/>
    </location>
</feature>
<feature type="transmembrane region" description="Helical" evidence="1">
    <location>
        <begin position="212"/>
        <end position="232"/>
    </location>
</feature>
<feature type="transmembrane region" description="Helical" evidence="1">
    <location>
        <begin position="251"/>
        <end position="271"/>
    </location>
</feature>
<feature type="transmembrane region" description="Helical" evidence="1">
    <location>
        <begin position="279"/>
        <end position="299"/>
    </location>
</feature>
<feature type="transmembrane region" description="Helical" evidence="1">
    <location>
        <begin position="303"/>
        <end position="323"/>
    </location>
</feature>
<feature type="transmembrane region" description="Helical" evidence="1">
    <location>
        <begin position="342"/>
        <end position="362"/>
    </location>
</feature>
<feature type="transmembrane region" description="Helical" evidence="1">
    <location>
        <begin position="371"/>
        <end position="391"/>
    </location>
</feature>
<feature type="sequence conflict" description="In Ref. 1; BAA12628." evidence="2" ref="1">
    <original>S</original>
    <variation>P</variation>
    <location>
        <position position="347"/>
    </location>
</feature>
<organism>
    <name type="scientific">Bacillus subtilis (strain 168)</name>
    <dbReference type="NCBI Taxonomy" id="224308"/>
    <lineage>
        <taxon>Bacteria</taxon>
        <taxon>Bacillati</taxon>
        <taxon>Bacillota</taxon>
        <taxon>Bacilli</taxon>
        <taxon>Bacillales</taxon>
        <taxon>Bacillaceae</taxon>
        <taxon>Bacillus</taxon>
    </lineage>
</organism>
<accession>P54559</accession>
<name>YQJV_BACSU</name>
<keyword id="KW-1003">Cell membrane</keyword>
<keyword id="KW-0472">Membrane</keyword>
<keyword id="KW-1185">Reference proteome</keyword>
<keyword id="KW-0812">Transmembrane</keyword>
<keyword id="KW-1133">Transmembrane helix</keyword>
<keyword id="KW-0813">Transport</keyword>
<comment type="subcellular location">
    <subcellularLocation>
        <location>Cell membrane</location>
        <topology>Multi-pass membrane protein</topology>
    </subcellularLocation>
</comment>
<comment type="similarity">
    <text evidence="2">Belongs to the major facilitator superfamily. TCR/Tet family.</text>
</comment>
<protein>
    <recommendedName>
        <fullName>Uncharacterized MFS-type transporter YqjV</fullName>
    </recommendedName>
</protein>